<gene>
    <name evidence="1" type="primary">cbpA</name>
    <name type="ordered locus">ECIAI39_2154</name>
</gene>
<keyword id="KW-0143">Chaperone</keyword>
<keyword id="KW-0963">Cytoplasm</keyword>
<keyword id="KW-0238">DNA-binding</keyword>
<comment type="function">
    <text evidence="1">DNA-binding protein that preferentially recognizes a curved DNA sequence. It is probably a functional analog of DnaJ; displays overlapping activities with DnaJ, but functions under different conditions, probably acting as a molecular chaperone in an adaptive response to environmental stresses other than heat shock. Lacks autonomous chaperone activity; binds native substrates and targets them for recognition by DnaK. Its activity is inhibited by the binding of CbpM.</text>
</comment>
<comment type="subcellular location">
    <subcellularLocation>
        <location evidence="1">Cytoplasm</location>
        <location evidence="1">Nucleoid</location>
    </subcellularLocation>
</comment>
<protein>
    <recommendedName>
        <fullName evidence="1">Curved DNA-binding protein</fullName>
    </recommendedName>
</protein>
<accession>B7NLC5</accession>
<organism>
    <name type="scientific">Escherichia coli O7:K1 (strain IAI39 / ExPEC)</name>
    <dbReference type="NCBI Taxonomy" id="585057"/>
    <lineage>
        <taxon>Bacteria</taxon>
        <taxon>Pseudomonadati</taxon>
        <taxon>Pseudomonadota</taxon>
        <taxon>Gammaproteobacteria</taxon>
        <taxon>Enterobacterales</taxon>
        <taxon>Enterobacteriaceae</taxon>
        <taxon>Escherichia</taxon>
    </lineage>
</organism>
<dbReference type="EMBL" id="CU928164">
    <property type="protein sequence ID" value="CAR18281.1"/>
    <property type="molecule type" value="Genomic_DNA"/>
</dbReference>
<dbReference type="RefSeq" id="WP_000420642.1">
    <property type="nucleotide sequence ID" value="NC_011750.1"/>
</dbReference>
<dbReference type="RefSeq" id="YP_002408117.1">
    <property type="nucleotide sequence ID" value="NC_011750.1"/>
</dbReference>
<dbReference type="SMR" id="B7NLC5"/>
<dbReference type="STRING" id="585057.ECIAI39_2154"/>
<dbReference type="KEGG" id="ect:ECIAI39_2154"/>
<dbReference type="PATRIC" id="fig|585057.6.peg.2243"/>
<dbReference type="HOGENOM" id="CLU_017633_0_0_6"/>
<dbReference type="Proteomes" id="UP000000749">
    <property type="component" value="Chromosome"/>
</dbReference>
<dbReference type="GO" id="GO:0005737">
    <property type="term" value="C:cytoplasm"/>
    <property type="evidence" value="ECO:0007669"/>
    <property type="project" value="UniProtKB-UniRule"/>
</dbReference>
<dbReference type="GO" id="GO:0009295">
    <property type="term" value="C:nucleoid"/>
    <property type="evidence" value="ECO:0007669"/>
    <property type="project" value="UniProtKB-SubCell"/>
</dbReference>
<dbReference type="GO" id="GO:0003681">
    <property type="term" value="F:bent DNA binding"/>
    <property type="evidence" value="ECO:0007669"/>
    <property type="project" value="UniProtKB-UniRule"/>
</dbReference>
<dbReference type="GO" id="GO:0051082">
    <property type="term" value="F:unfolded protein binding"/>
    <property type="evidence" value="ECO:0007669"/>
    <property type="project" value="InterPro"/>
</dbReference>
<dbReference type="GO" id="GO:0051085">
    <property type="term" value="P:chaperone cofactor-dependent protein refolding"/>
    <property type="evidence" value="ECO:0007669"/>
    <property type="project" value="TreeGrafter"/>
</dbReference>
<dbReference type="GO" id="GO:0042026">
    <property type="term" value="P:protein refolding"/>
    <property type="evidence" value="ECO:0007669"/>
    <property type="project" value="TreeGrafter"/>
</dbReference>
<dbReference type="CDD" id="cd06257">
    <property type="entry name" value="DnaJ"/>
    <property type="match status" value="1"/>
</dbReference>
<dbReference type="CDD" id="cd10747">
    <property type="entry name" value="DnaJ_C"/>
    <property type="match status" value="1"/>
</dbReference>
<dbReference type="FunFam" id="1.10.287.110:FF:000013">
    <property type="entry name" value="Curved DNA-binding protein"/>
    <property type="match status" value="1"/>
</dbReference>
<dbReference type="FunFam" id="2.60.260.20:FF:000008">
    <property type="entry name" value="Curved DNA-binding protein"/>
    <property type="match status" value="1"/>
</dbReference>
<dbReference type="FunFam" id="2.60.260.20:FF:000010">
    <property type="entry name" value="Curved DNA-binding protein"/>
    <property type="match status" value="1"/>
</dbReference>
<dbReference type="Gene3D" id="1.10.287.110">
    <property type="entry name" value="DnaJ domain"/>
    <property type="match status" value="1"/>
</dbReference>
<dbReference type="Gene3D" id="1.20.5.460">
    <property type="entry name" value="Single helix bin"/>
    <property type="match status" value="1"/>
</dbReference>
<dbReference type="Gene3D" id="2.60.260.20">
    <property type="entry name" value="Urease metallochaperone UreE, N-terminal domain"/>
    <property type="match status" value="2"/>
</dbReference>
<dbReference type="HAMAP" id="MF_01154">
    <property type="entry name" value="CbpA"/>
    <property type="match status" value="1"/>
</dbReference>
<dbReference type="InterPro" id="IPR023859">
    <property type="entry name" value="DNA-bd_curved-DNA"/>
</dbReference>
<dbReference type="InterPro" id="IPR002939">
    <property type="entry name" value="DnaJ_C"/>
</dbReference>
<dbReference type="InterPro" id="IPR001623">
    <property type="entry name" value="DnaJ_domain"/>
</dbReference>
<dbReference type="InterPro" id="IPR018253">
    <property type="entry name" value="DnaJ_domain_CS"/>
</dbReference>
<dbReference type="InterPro" id="IPR008971">
    <property type="entry name" value="HSP40/DnaJ_pept-bd"/>
</dbReference>
<dbReference type="InterPro" id="IPR036869">
    <property type="entry name" value="J_dom_sf"/>
</dbReference>
<dbReference type="NCBIfam" id="NF007618">
    <property type="entry name" value="PRK10266.1"/>
    <property type="match status" value="1"/>
</dbReference>
<dbReference type="PANTHER" id="PTHR43096">
    <property type="entry name" value="DNAJ HOMOLOG 1, MITOCHONDRIAL-RELATED"/>
    <property type="match status" value="1"/>
</dbReference>
<dbReference type="PANTHER" id="PTHR43096:SF52">
    <property type="entry name" value="DNAJ HOMOLOG 1, MITOCHONDRIAL-RELATED"/>
    <property type="match status" value="1"/>
</dbReference>
<dbReference type="Pfam" id="PF00226">
    <property type="entry name" value="DnaJ"/>
    <property type="match status" value="1"/>
</dbReference>
<dbReference type="Pfam" id="PF01556">
    <property type="entry name" value="DnaJ_C"/>
    <property type="match status" value="1"/>
</dbReference>
<dbReference type="PRINTS" id="PR00625">
    <property type="entry name" value="JDOMAIN"/>
</dbReference>
<dbReference type="SMART" id="SM00271">
    <property type="entry name" value="DnaJ"/>
    <property type="match status" value="1"/>
</dbReference>
<dbReference type="SUPFAM" id="SSF46565">
    <property type="entry name" value="Chaperone J-domain"/>
    <property type="match status" value="1"/>
</dbReference>
<dbReference type="SUPFAM" id="SSF49493">
    <property type="entry name" value="HSP40/DnaJ peptide-binding domain"/>
    <property type="match status" value="2"/>
</dbReference>
<dbReference type="PROSITE" id="PS00636">
    <property type="entry name" value="DNAJ_1"/>
    <property type="match status" value="1"/>
</dbReference>
<dbReference type="PROSITE" id="PS50076">
    <property type="entry name" value="DNAJ_2"/>
    <property type="match status" value="1"/>
</dbReference>
<feature type="chain" id="PRO_1000137747" description="Curved DNA-binding protein">
    <location>
        <begin position="1"/>
        <end position="306"/>
    </location>
</feature>
<feature type="domain" description="J" evidence="1">
    <location>
        <begin position="5"/>
        <end position="69"/>
    </location>
</feature>
<proteinExistence type="inferred from homology"/>
<evidence type="ECO:0000255" key="1">
    <source>
        <dbReference type="HAMAP-Rule" id="MF_01154"/>
    </source>
</evidence>
<reference key="1">
    <citation type="journal article" date="2009" name="PLoS Genet.">
        <title>Organised genome dynamics in the Escherichia coli species results in highly diverse adaptive paths.</title>
        <authorList>
            <person name="Touchon M."/>
            <person name="Hoede C."/>
            <person name="Tenaillon O."/>
            <person name="Barbe V."/>
            <person name="Baeriswyl S."/>
            <person name="Bidet P."/>
            <person name="Bingen E."/>
            <person name="Bonacorsi S."/>
            <person name="Bouchier C."/>
            <person name="Bouvet O."/>
            <person name="Calteau A."/>
            <person name="Chiapello H."/>
            <person name="Clermont O."/>
            <person name="Cruveiller S."/>
            <person name="Danchin A."/>
            <person name="Diard M."/>
            <person name="Dossat C."/>
            <person name="Karoui M.E."/>
            <person name="Frapy E."/>
            <person name="Garry L."/>
            <person name="Ghigo J.M."/>
            <person name="Gilles A.M."/>
            <person name="Johnson J."/>
            <person name="Le Bouguenec C."/>
            <person name="Lescat M."/>
            <person name="Mangenot S."/>
            <person name="Martinez-Jehanne V."/>
            <person name="Matic I."/>
            <person name="Nassif X."/>
            <person name="Oztas S."/>
            <person name="Petit M.A."/>
            <person name="Pichon C."/>
            <person name="Rouy Z."/>
            <person name="Ruf C.S."/>
            <person name="Schneider D."/>
            <person name="Tourret J."/>
            <person name="Vacherie B."/>
            <person name="Vallenet D."/>
            <person name="Medigue C."/>
            <person name="Rocha E.P.C."/>
            <person name="Denamur E."/>
        </authorList>
    </citation>
    <scope>NUCLEOTIDE SEQUENCE [LARGE SCALE GENOMIC DNA]</scope>
    <source>
        <strain>IAI39 / ExPEC</strain>
    </source>
</reference>
<name>CBPA_ECO7I</name>
<sequence>MELKDYYAIMGVKPTDDLKTIKTAYRRLARKYHPDVSKEPDAEARFKEVAEAWEVLSDEQRRAEYDQMWQHRNDPQFSRQFQHGDGQSFNAEDFDDIFSSIFGQHARQSRQRPATRGHDIEIEVAVFLEETLTEHKRTISYNLPVYNAFGMIEQEIPKTLNVKIPAGVGNGQRIRLKGQGTPGENGGPNGDLWLVIHIAPHPLFDIVGQDLEIVVPVSPWEAALGAKVTVPTLKESILLTIPPGSQAGQRLRVKGKGLVSKKQTGDLYAVLKIVMPPKPDENTAALWQQLADAQSSFEPRKDWGKA</sequence>